<sequence>MTIAAGSDDNRQRRAALLLLACLAVLALQILVLHLMGRLWICECGYIKLWEGVAKSSGNSQHVSDWYTPSHIIHGFLFYGLGHLLMRGKPLSGRLLLATVIESAWEILENTPMVINRYRSATISLDYFGDSILNSTMDTLAMATGFLIASRLPVAVTVAIAIALELFTGFMVRDNLTLNVLMLVWPMDAVKAWQAG</sequence>
<name>Y3089_SINMW</name>
<evidence type="ECO:0000255" key="1">
    <source>
        <dbReference type="HAMAP-Rule" id="MF_01514"/>
    </source>
</evidence>
<reference key="1">
    <citation type="submission" date="2007-06" db="EMBL/GenBank/DDBJ databases">
        <title>Complete sequence of Sinorhizobium medicae WSM419 chromosome.</title>
        <authorList>
            <consortium name="US DOE Joint Genome Institute"/>
            <person name="Copeland A."/>
            <person name="Lucas S."/>
            <person name="Lapidus A."/>
            <person name="Barry K."/>
            <person name="Glavina del Rio T."/>
            <person name="Dalin E."/>
            <person name="Tice H."/>
            <person name="Pitluck S."/>
            <person name="Chain P."/>
            <person name="Malfatti S."/>
            <person name="Shin M."/>
            <person name="Vergez L."/>
            <person name="Schmutz J."/>
            <person name="Larimer F."/>
            <person name="Land M."/>
            <person name="Hauser L."/>
            <person name="Kyrpides N."/>
            <person name="Mikhailova N."/>
            <person name="Reeve W.G."/>
            <person name="Richardson P."/>
        </authorList>
    </citation>
    <scope>NUCLEOTIDE SEQUENCE [LARGE SCALE GENOMIC DNA]</scope>
    <source>
        <strain>WSM419</strain>
    </source>
</reference>
<keyword id="KW-1003">Cell membrane</keyword>
<keyword id="KW-0472">Membrane</keyword>
<keyword id="KW-0812">Transmembrane</keyword>
<keyword id="KW-1133">Transmembrane helix</keyword>
<organism>
    <name type="scientific">Sinorhizobium medicae (strain WSM419)</name>
    <name type="common">Ensifer medicae</name>
    <dbReference type="NCBI Taxonomy" id="366394"/>
    <lineage>
        <taxon>Bacteria</taxon>
        <taxon>Pseudomonadati</taxon>
        <taxon>Pseudomonadota</taxon>
        <taxon>Alphaproteobacteria</taxon>
        <taxon>Hyphomicrobiales</taxon>
        <taxon>Rhizobiaceae</taxon>
        <taxon>Sinorhizobium/Ensifer group</taxon>
        <taxon>Sinorhizobium</taxon>
    </lineage>
</organism>
<comment type="subcellular location">
    <subcellularLocation>
        <location evidence="1">Cell membrane</location>
        <topology evidence="1">Multi-pass membrane protein</topology>
    </subcellularLocation>
</comment>
<comment type="similarity">
    <text evidence="1">Belongs to the UPF0314 family.</text>
</comment>
<proteinExistence type="inferred from homology"/>
<dbReference type="EMBL" id="CP000738">
    <property type="protein sequence ID" value="ABR61915.1"/>
    <property type="molecule type" value="Genomic_DNA"/>
</dbReference>
<dbReference type="RefSeq" id="WP_012067296.1">
    <property type="nucleotide sequence ID" value="NC_009636.1"/>
</dbReference>
<dbReference type="RefSeq" id="YP_001328750.1">
    <property type="nucleotide sequence ID" value="NC_009636.1"/>
</dbReference>
<dbReference type="STRING" id="366394.Smed_3089"/>
<dbReference type="KEGG" id="smd:Smed_3089"/>
<dbReference type="PATRIC" id="fig|366394.8.peg.6320"/>
<dbReference type="eggNOG" id="ENOG502ZZUX">
    <property type="taxonomic scope" value="Bacteria"/>
</dbReference>
<dbReference type="HOGENOM" id="CLU_1395337_0_0_5"/>
<dbReference type="OrthoDB" id="9811954at2"/>
<dbReference type="Proteomes" id="UP000001108">
    <property type="component" value="Chromosome"/>
</dbReference>
<dbReference type="GO" id="GO:0005886">
    <property type="term" value="C:plasma membrane"/>
    <property type="evidence" value="ECO:0007669"/>
    <property type="project" value="UniProtKB-SubCell"/>
</dbReference>
<dbReference type="HAMAP" id="MF_01514">
    <property type="entry name" value="UPF0314"/>
    <property type="match status" value="1"/>
</dbReference>
<dbReference type="InterPro" id="IPR019691">
    <property type="entry name" value="DUF2585"/>
</dbReference>
<dbReference type="NCBIfam" id="NF002099">
    <property type="entry name" value="PRK00944.1"/>
    <property type="match status" value="1"/>
</dbReference>
<dbReference type="Pfam" id="PF10755">
    <property type="entry name" value="DUF2585"/>
    <property type="match status" value="1"/>
</dbReference>
<feature type="chain" id="PRO_1000024503" description="UPF0314 protein Smed_3089">
    <location>
        <begin position="1"/>
        <end position="196"/>
    </location>
</feature>
<feature type="transmembrane region" description="Helical" evidence="1">
    <location>
        <begin position="16"/>
        <end position="36"/>
    </location>
</feature>
<feature type="transmembrane region" description="Helical" evidence="1">
    <location>
        <begin position="66"/>
        <end position="86"/>
    </location>
</feature>
<feature type="transmembrane region" description="Helical" evidence="1">
    <location>
        <begin position="152"/>
        <end position="172"/>
    </location>
</feature>
<accession>A6UE35</accession>
<gene>
    <name type="ordered locus">Smed_3089</name>
</gene>
<protein>
    <recommendedName>
        <fullName evidence="1">UPF0314 protein Smed_3089</fullName>
    </recommendedName>
</protein>